<keyword id="KW-0150">Chloroplast</keyword>
<keyword id="KW-0934">Plastid</keyword>
<keyword id="KW-0687">Ribonucleoprotein</keyword>
<keyword id="KW-0689">Ribosomal protein</keyword>
<name>RR15_OENAR</name>
<organism>
    <name type="scientific">Oenothera argillicola</name>
    <name type="common">Appalachian evening primrose</name>
    <dbReference type="NCBI Taxonomy" id="3940"/>
    <lineage>
        <taxon>Eukaryota</taxon>
        <taxon>Viridiplantae</taxon>
        <taxon>Streptophyta</taxon>
        <taxon>Embryophyta</taxon>
        <taxon>Tracheophyta</taxon>
        <taxon>Spermatophyta</taxon>
        <taxon>Magnoliopsida</taxon>
        <taxon>eudicotyledons</taxon>
        <taxon>Gunneridae</taxon>
        <taxon>Pentapetalae</taxon>
        <taxon>rosids</taxon>
        <taxon>malvids</taxon>
        <taxon>Myrtales</taxon>
        <taxon>Onagraceae</taxon>
        <taxon>Onagroideae</taxon>
        <taxon>Onagreae</taxon>
        <taxon>Oenothera</taxon>
    </lineage>
</organism>
<feature type="chain" id="PRO_0000354270" description="Small ribosomal subunit protein uS15c">
    <location>
        <begin position="1"/>
        <end position="87"/>
    </location>
</feature>
<evidence type="ECO:0000250" key="1"/>
<evidence type="ECO:0000305" key="2"/>
<accession>B0Z4T2</accession>
<geneLocation type="chloroplast"/>
<dbReference type="EMBL" id="EU262887">
    <property type="protein sequence ID" value="ABW98760.1"/>
    <property type="molecule type" value="Genomic_DNA"/>
</dbReference>
<dbReference type="RefSeq" id="YP_001687193.1">
    <property type="nucleotide sequence ID" value="NC_010358.2"/>
</dbReference>
<dbReference type="SMR" id="B0Z4T2"/>
<dbReference type="GeneID" id="5951869"/>
<dbReference type="GO" id="GO:0009507">
    <property type="term" value="C:chloroplast"/>
    <property type="evidence" value="ECO:0007669"/>
    <property type="project" value="UniProtKB-SubCell"/>
</dbReference>
<dbReference type="GO" id="GO:1990904">
    <property type="term" value="C:ribonucleoprotein complex"/>
    <property type="evidence" value="ECO:0007669"/>
    <property type="project" value="UniProtKB-KW"/>
</dbReference>
<dbReference type="GO" id="GO:0005840">
    <property type="term" value="C:ribosome"/>
    <property type="evidence" value="ECO:0007669"/>
    <property type="project" value="UniProtKB-KW"/>
</dbReference>
<dbReference type="GO" id="GO:0003735">
    <property type="term" value="F:structural constituent of ribosome"/>
    <property type="evidence" value="ECO:0007669"/>
    <property type="project" value="InterPro"/>
</dbReference>
<dbReference type="GO" id="GO:0006412">
    <property type="term" value="P:translation"/>
    <property type="evidence" value="ECO:0007669"/>
    <property type="project" value="UniProtKB-UniRule"/>
</dbReference>
<dbReference type="CDD" id="cd00353">
    <property type="entry name" value="Ribosomal_S15p_S13e"/>
    <property type="match status" value="1"/>
</dbReference>
<dbReference type="Gene3D" id="1.10.287.10">
    <property type="entry name" value="S15/NS1, RNA-binding"/>
    <property type="match status" value="1"/>
</dbReference>
<dbReference type="HAMAP" id="MF_01343_B">
    <property type="entry name" value="Ribosomal_uS15_B"/>
    <property type="match status" value="1"/>
</dbReference>
<dbReference type="InterPro" id="IPR000589">
    <property type="entry name" value="Ribosomal_uS15"/>
</dbReference>
<dbReference type="InterPro" id="IPR005290">
    <property type="entry name" value="Ribosomal_uS15_bac-type"/>
</dbReference>
<dbReference type="InterPro" id="IPR009068">
    <property type="entry name" value="uS15_NS1_RNA-bd_sf"/>
</dbReference>
<dbReference type="NCBIfam" id="TIGR00952">
    <property type="entry name" value="S15_bact"/>
    <property type="match status" value="1"/>
</dbReference>
<dbReference type="PANTHER" id="PTHR23321">
    <property type="entry name" value="RIBOSOMAL PROTEIN S15, BACTERIAL AND ORGANELLAR"/>
    <property type="match status" value="1"/>
</dbReference>
<dbReference type="PANTHER" id="PTHR23321:SF26">
    <property type="entry name" value="SMALL RIBOSOMAL SUBUNIT PROTEIN US15M"/>
    <property type="match status" value="1"/>
</dbReference>
<dbReference type="Pfam" id="PF00312">
    <property type="entry name" value="Ribosomal_S15"/>
    <property type="match status" value="1"/>
</dbReference>
<dbReference type="SMART" id="SM01387">
    <property type="entry name" value="Ribosomal_S15"/>
    <property type="match status" value="1"/>
</dbReference>
<dbReference type="SUPFAM" id="SSF47060">
    <property type="entry name" value="S15/NS1 RNA-binding domain"/>
    <property type="match status" value="1"/>
</dbReference>
<dbReference type="PROSITE" id="PS00362">
    <property type="entry name" value="RIBOSOMAL_S15"/>
    <property type="match status" value="1"/>
</dbReference>
<protein>
    <recommendedName>
        <fullName evidence="2">Small ribosomal subunit protein uS15c</fullName>
    </recommendedName>
    <alternativeName>
        <fullName>30S ribosomal protein S15, chloroplastic</fullName>
    </alternativeName>
</protein>
<sequence length="87" mass="10408">MVKNAFISVISQEENRGSVEFQVVIFTNKIRRLTSHLEFHRKDFLSQRGLRKILGKRQRLLSYLSKKDKVRYTELISQLDIRELTTR</sequence>
<comment type="subunit">
    <text evidence="1">Part of the 30S ribosomal subunit.</text>
</comment>
<comment type="subcellular location">
    <subcellularLocation>
        <location>Plastid</location>
        <location>Chloroplast</location>
    </subcellularLocation>
</comment>
<comment type="similarity">
    <text evidence="2">Belongs to the universal ribosomal protein uS15 family.</text>
</comment>
<reference key="1">
    <citation type="journal article" date="2008" name="Nucleic Acids Res.">
        <title>The complete nucleotide sequences of the five genetically distinct plastid genomes of Oenothera, subsection Oenothera: I. Sequence evaluation and plastome evolution.</title>
        <authorList>
            <person name="Greiner S."/>
            <person name="Wang X."/>
            <person name="Rauwolf U."/>
            <person name="Silber M.V."/>
            <person name="Mayer K."/>
            <person name="Meurer J."/>
            <person name="Haberer G."/>
            <person name="Herrmann R.G."/>
        </authorList>
    </citation>
    <scope>NUCLEOTIDE SEQUENCE [LARGE SCALE GENOMIC DNA]</scope>
    <source>
        <strain>cv. Douthat 1</strain>
    </source>
</reference>
<gene>
    <name type="primary">rps15</name>
</gene>
<proteinExistence type="inferred from homology"/>